<keyword id="KW-0004">4Fe-4S</keyword>
<keyword id="KW-0150">Chloroplast</keyword>
<keyword id="KW-0408">Iron</keyword>
<keyword id="KW-0411">Iron-sulfur</keyword>
<keyword id="KW-0472">Membrane</keyword>
<keyword id="KW-0479">Metal-binding</keyword>
<keyword id="KW-0520">NAD</keyword>
<keyword id="KW-0521">NADP</keyword>
<keyword id="KW-0934">Plastid</keyword>
<keyword id="KW-0618">Plastoquinone</keyword>
<keyword id="KW-0874">Quinone</keyword>
<keyword id="KW-0677">Repeat</keyword>
<keyword id="KW-0793">Thylakoid</keyword>
<keyword id="KW-1278">Translocase</keyword>
<proteinExistence type="inferred from homology"/>
<geneLocation type="chloroplast"/>
<comment type="function">
    <text evidence="1">NDH shuttles electrons from NAD(P)H:plastoquinone, via FMN and iron-sulfur (Fe-S) centers, to quinones in the photosynthetic chain and possibly in a chloroplast respiratory chain. The immediate electron acceptor for the enzyme in this species is believed to be plastoquinone. Couples the redox reaction to proton translocation, and thus conserves the redox energy in a proton gradient.</text>
</comment>
<comment type="catalytic activity">
    <reaction evidence="1">
        <text>a plastoquinone + NADH + (n+1) H(+)(in) = a plastoquinol + NAD(+) + n H(+)(out)</text>
        <dbReference type="Rhea" id="RHEA:42608"/>
        <dbReference type="Rhea" id="RHEA-COMP:9561"/>
        <dbReference type="Rhea" id="RHEA-COMP:9562"/>
        <dbReference type="ChEBI" id="CHEBI:15378"/>
        <dbReference type="ChEBI" id="CHEBI:17757"/>
        <dbReference type="ChEBI" id="CHEBI:57540"/>
        <dbReference type="ChEBI" id="CHEBI:57945"/>
        <dbReference type="ChEBI" id="CHEBI:62192"/>
    </reaction>
</comment>
<comment type="catalytic activity">
    <reaction evidence="1">
        <text>a plastoquinone + NADPH + (n+1) H(+)(in) = a plastoquinol + NADP(+) + n H(+)(out)</text>
        <dbReference type="Rhea" id="RHEA:42612"/>
        <dbReference type="Rhea" id="RHEA-COMP:9561"/>
        <dbReference type="Rhea" id="RHEA-COMP:9562"/>
        <dbReference type="ChEBI" id="CHEBI:15378"/>
        <dbReference type="ChEBI" id="CHEBI:17757"/>
        <dbReference type="ChEBI" id="CHEBI:57783"/>
        <dbReference type="ChEBI" id="CHEBI:58349"/>
        <dbReference type="ChEBI" id="CHEBI:62192"/>
    </reaction>
</comment>
<comment type="cofactor">
    <cofactor evidence="1">
        <name>[4Fe-4S] cluster</name>
        <dbReference type="ChEBI" id="CHEBI:49883"/>
    </cofactor>
    <text evidence="1">Binds 2 [4Fe-4S] clusters per subunit.</text>
</comment>
<comment type="subunit">
    <text evidence="1">NDH is composed of at least 16 different subunits, 5 of which are encoded in the nucleus.</text>
</comment>
<comment type="subcellular location">
    <subcellularLocation>
        <location evidence="1">Plastid</location>
        <location evidence="1">Chloroplast thylakoid membrane</location>
        <topology evidence="1">Peripheral membrane protein</topology>
    </subcellularLocation>
</comment>
<comment type="similarity">
    <text evidence="1">Belongs to the complex I 23 kDa subunit family.</text>
</comment>
<evidence type="ECO:0000255" key="1">
    <source>
        <dbReference type="HAMAP-Rule" id="MF_01351"/>
    </source>
</evidence>
<feature type="chain" id="PRO_0000250809" description="NAD(P)H-quinone oxidoreductase subunit I, chloroplastic">
    <location>
        <begin position="1"/>
        <end position="166"/>
    </location>
</feature>
<feature type="domain" description="4Fe-4S ferredoxin-type 1" evidence="1">
    <location>
        <begin position="55"/>
        <end position="84"/>
    </location>
</feature>
<feature type="domain" description="4Fe-4S ferredoxin-type 2" evidence="1">
    <location>
        <begin position="95"/>
        <end position="124"/>
    </location>
</feature>
<feature type="binding site" evidence="1">
    <location>
        <position position="64"/>
    </location>
    <ligand>
        <name>[4Fe-4S] cluster</name>
        <dbReference type="ChEBI" id="CHEBI:49883"/>
        <label>1</label>
    </ligand>
</feature>
<feature type="binding site" evidence="1">
    <location>
        <position position="67"/>
    </location>
    <ligand>
        <name>[4Fe-4S] cluster</name>
        <dbReference type="ChEBI" id="CHEBI:49883"/>
        <label>1</label>
    </ligand>
</feature>
<feature type="binding site" evidence="1">
    <location>
        <position position="70"/>
    </location>
    <ligand>
        <name>[4Fe-4S] cluster</name>
        <dbReference type="ChEBI" id="CHEBI:49883"/>
        <label>1</label>
    </ligand>
</feature>
<feature type="binding site" evidence="1">
    <location>
        <position position="74"/>
    </location>
    <ligand>
        <name>[4Fe-4S] cluster</name>
        <dbReference type="ChEBI" id="CHEBI:49883"/>
        <label>2</label>
    </ligand>
</feature>
<feature type="binding site" evidence="1">
    <location>
        <position position="104"/>
    </location>
    <ligand>
        <name>[4Fe-4S] cluster</name>
        <dbReference type="ChEBI" id="CHEBI:49883"/>
        <label>2</label>
    </ligand>
</feature>
<feature type="binding site" evidence="1">
    <location>
        <position position="107"/>
    </location>
    <ligand>
        <name>[4Fe-4S] cluster</name>
        <dbReference type="ChEBI" id="CHEBI:49883"/>
        <label>2</label>
    </ligand>
</feature>
<feature type="binding site" evidence="1">
    <location>
        <position position="110"/>
    </location>
    <ligand>
        <name>[4Fe-4S] cluster</name>
        <dbReference type="ChEBI" id="CHEBI:49883"/>
        <label>2</label>
    </ligand>
</feature>
<feature type="binding site" evidence="1">
    <location>
        <position position="114"/>
    </location>
    <ligand>
        <name>[4Fe-4S] cluster</name>
        <dbReference type="ChEBI" id="CHEBI:49883"/>
        <label>1</label>
    </ligand>
</feature>
<sequence>MFPMVTEFMNYGQQTVRAARYIGQGFMITLSHANRLPVTIQYPYEKLITSERFRGRIHFEFDKCIACEVCVRVCPIDLPVVDWKLETDIRKKRLLNYSIDFGICIFCGNCVEYCPTNCLSMTEEYELSTYDRHELNYNQIALGRLPMSIIDDYTIRTIFNLPEIKT</sequence>
<dbReference type="EC" id="7.1.1.-" evidence="1"/>
<dbReference type="EMBL" id="AF383809">
    <property type="protein sequence ID" value="AAN61750.1"/>
    <property type="molecule type" value="Genomic_DNA"/>
</dbReference>
<dbReference type="SMR" id="Q8HVQ4"/>
<dbReference type="GO" id="GO:0009535">
    <property type="term" value="C:chloroplast thylakoid membrane"/>
    <property type="evidence" value="ECO:0007669"/>
    <property type="project" value="UniProtKB-SubCell"/>
</dbReference>
<dbReference type="GO" id="GO:0051539">
    <property type="term" value="F:4 iron, 4 sulfur cluster binding"/>
    <property type="evidence" value="ECO:0007669"/>
    <property type="project" value="UniProtKB-KW"/>
</dbReference>
<dbReference type="GO" id="GO:0005506">
    <property type="term" value="F:iron ion binding"/>
    <property type="evidence" value="ECO:0007669"/>
    <property type="project" value="UniProtKB-UniRule"/>
</dbReference>
<dbReference type="GO" id="GO:0008137">
    <property type="term" value="F:NADH dehydrogenase (ubiquinone) activity"/>
    <property type="evidence" value="ECO:0007669"/>
    <property type="project" value="InterPro"/>
</dbReference>
<dbReference type="GO" id="GO:0048038">
    <property type="term" value="F:quinone binding"/>
    <property type="evidence" value="ECO:0007669"/>
    <property type="project" value="UniProtKB-KW"/>
</dbReference>
<dbReference type="GO" id="GO:0019684">
    <property type="term" value="P:photosynthesis, light reaction"/>
    <property type="evidence" value="ECO:0007669"/>
    <property type="project" value="UniProtKB-UniRule"/>
</dbReference>
<dbReference type="FunFam" id="3.30.70.3270:FF:000006">
    <property type="entry name" value="NAD(P)H-quinone oxidoreductase subunit I, chloroplastic"/>
    <property type="match status" value="1"/>
</dbReference>
<dbReference type="Gene3D" id="3.30.70.3270">
    <property type="match status" value="1"/>
</dbReference>
<dbReference type="HAMAP" id="MF_01351">
    <property type="entry name" value="NDH1_NuoI"/>
    <property type="match status" value="1"/>
</dbReference>
<dbReference type="InterPro" id="IPR017896">
    <property type="entry name" value="4Fe4S_Fe-S-bd"/>
</dbReference>
<dbReference type="InterPro" id="IPR017900">
    <property type="entry name" value="4Fe4S_Fe_S_CS"/>
</dbReference>
<dbReference type="InterPro" id="IPR010226">
    <property type="entry name" value="NADH_quinone_OxRdtase_chainI"/>
</dbReference>
<dbReference type="InterPro" id="IPR004497">
    <property type="entry name" value="NDHI"/>
</dbReference>
<dbReference type="NCBIfam" id="TIGR00403">
    <property type="entry name" value="ndhI"/>
    <property type="match status" value="1"/>
</dbReference>
<dbReference type="NCBIfam" id="TIGR01971">
    <property type="entry name" value="NuoI"/>
    <property type="match status" value="1"/>
</dbReference>
<dbReference type="NCBIfam" id="NF004537">
    <property type="entry name" value="PRK05888.1-3"/>
    <property type="match status" value="1"/>
</dbReference>
<dbReference type="PANTHER" id="PTHR47275">
    <property type="entry name" value="NAD(P)H-QUINONE OXIDOREDUCTASE SUBUNIT I, CHLOROPLASTIC"/>
    <property type="match status" value="1"/>
</dbReference>
<dbReference type="PANTHER" id="PTHR47275:SF1">
    <property type="entry name" value="NAD(P)H-QUINONE OXIDOREDUCTASE SUBUNIT I, CHLOROPLASTIC"/>
    <property type="match status" value="1"/>
</dbReference>
<dbReference type="Pfam" id="PF00037">
    <property type="entry name" value="Fer4"/>
    <property type="match status" value="2"/>
</dbReference>
<dbReference type="SUPFAM" id="SSF54862">
    <property type="entry name" value="4Fe-4S ferredoxins"/>
    <property type="match status" value="1"/>
</dbReference>
<dbReference type="PROSITE" id="PS00198">
    <property type="entry name" value="4FE4S_FER_1"/>
    <property type="match status" value="2"/>
</dbReference>
<dbReference type="PROSITE" id="PS51379">
    <property type="entry name" value="4FE4S_FER_2"/>
    <property type="match status" value="2"/>
</dbReference>
<gene>
    <name evidence="1" type="primary">ndhI</name>
</gene>
<organism>
    <name type="scientific">Layia heterotricha</name>
    <name type="common">Paleyellow tidytips</name>
    <dbReference type="NCBI Taxonomy" id="149443"/>
    <lineage>
        <taxon>Eukaryota</taxon>
        <taxon>Viridiplantae</taxon>
        <taxon>Streptophyta</taxon>
        <taxon>Embryophyta</taxon>
        <taxon>Tracheophyta</taxon>
        <taxon>Spermatophyta</taxon>
        <taxon>Magnoliopsida</taxon>
        <taxon>eudicotyledons</taxon>
        <taxon>Gunneridae</taxon>
        <taxon>Pentapetalae</taxon>
        <taxon>asterids</taxon>
        <taxon>campanulids</taxon>
        <taxon>Asterales</taxon>
        <taxon>Asteraceae</taxon>
        <taxon>Asteroideae</taxon>
        <taxon>Heliantheae alliance</taxon>
        <taxon>Madieae</taxon>
        <taxon>Madiinae</taxon>
        <taxon>Layia</taxon>
    </lineage>
</organism>
<reference key="1">
    <citation type="submission" date="2003-01" db="EMBL/GenBank/DDBJ databases">
        <title>Chloroplast DNA phylogeny of tribe Heliantheae (Asteraceae).</title>
        <authorList>
            <person name="Panero J.L."/>
            <person name="Baldwin B.G."/>
            <person name="Schilling E.E."/>
            <person name="Clevinger J.A."/>
        </authorList>
    </citation>
    <scope>NUCLEOTIDE SEQUENCE [GENOMIC DNA]</scope>
</reference>
<protein>
    <recommendedName>
        <fullName evidence="1">NAD(P)H-quinone oxidoreductase subunit I, chloroplastic</fullName>
        <ecNumber evidence="1">7.1.1.-</ecNumber>
    </recommendedName>
    <alternativeName>
        <fullName evidence="1">NAD(P)H dehydrogenase subunit I</fullName>
        <shortName evidence="1">NDH subunit I</shortName>
    </alternativeName>
    <alternativeName>
        <fullName evidence="1">NADH-plastoquinone oxidoreductase subunit I</fullName>
    </alternativeName>
</protein>
<accession>Q8HVQ4</accession>
<name>NDHI_LAYHE</name>